<protein>
    <recommendedName>
        <fullName>Photox toxin</fullName>
        <ecNumber>2.4.2.31</ecNumber>
    </recommendedName>
    <alternativeName>
        <fullName>Mono(ADP-ribosyl)transferase</fullName>
        <shortName>mADPRT</shortName>
        <shortName>mART</shortName>
    </alternativeName>
    <alternativeName>
        <fullName>NAD(+)--arginine ADP-ribosyltransferase</fullName>
    </alternativeName>
</protein>
<gene>
    <name type="primary">phxA</name>
    <name type="ordered locus">plu0822</name>
</gene>
<reference key="1">
    <citation type="journal article" date="2003" name="Nat. Biotechnol.">
        <title>The genome sequence of the entomopathogenic bacterium Photorhabdus luminescens.</title>
        <authorList>
            <person name="Duchaud E."/>
            <person name="Rusniok C."/>
            <person name="Frangeul L."/>
            <person name="Buchrieser C."/>
            <person name="Givaudan A."/>
            <person name="Taourit S."/>
            <person name="Bocs S."/>
            <person name="Boursaux-Eude C."/>
            <person name="Chandler M."/>
            <person name="Charles J.-F."/>
            <person name="Dassa E."/>
            <person name="Derose R."/>
            <person name="Derzelle S."/>
            <person name="Freyssinet G."/>
            <person name="Gaudriault S."/>
            <person name="Medigue C."/>
            <person name="Lanois A."/>
            <person name="Powell K."/>
            <person name="Siguier P."/>
            <person name="Vincent R."/>
            <person name="Wingate V."/>
            <person name="Zouine M."/>
            <person name="Glaser P."/>
            <person name="Boemare N."/>
            <person name="Danchin A."/>
            <person name="Kunst F."/>
        </authorList>
    </citation>
    <scope>NUCLEOTIDE SEQUENCE [LARGE SCALE GENOMIC DNA]</scope>
    <source>
        <strain>DSM 15139 / CIP 105565 / TT01</strain>
    </source>
</reference>
<reference key="2">
    <citation type="journal article" date="2010" name="J. Biol. Chem.">
        <title>Photox, a novel actin-targeting mono-ADP-ribosyltransferase from Photorhabdus luminescens.</title>
        <authorList>
            <person name="Visschedyk D.D."/>
            <person name="Perieteanu A.A."/>
            <person name="Turgeon Z.J."/>
            <person name="Fieldhouse R.J."/>
            <person name="Dawson J.F."/>
            <person name="Merrill A.R."/>
        </authorList>
    </citation>
    <scope>FUNCTION AS A TOXIN</scope>
    <scope>ACTIN AS SUBSTRATE</scope>
    <scope>BIOPHYSICOCHEMICAL PROPERTIES</scope>
    <scope>MUTAGENESIS OF ARG-288; 318-SER--SER-320; GLU-353 AND GLU-355</scope>
    <scope>EXPRESSION IN YEAST</scope>
    <scope>LACK OF NAD(+)-GLYCOHYDROLASE ACTIVITY</scope>
    <source>
        <strain>DSM 15139 / CIP 105565 / TT01</strain>
    </source>
</reference>
<organism>
    <name type="scientific">Photorhabdus laumondii subsp. laumondii (strain DSM 15139 / CIP 105565 / TT01)</name>
    <name type="common">Photorhabdus luminescens subsp. laumondii</name>
    <dbReference type="NCBI Taxonomy" id="243265"/>
    <lineage>
        <taxon>Bacteria</taxon>
        <taxon>Pseudomonadati</taxon>
        <taxon>Pseudomonadota</taxon>
        <taxon>Gammaproteobacteria</taxon>
        <taxon>Enterobacterales</taxon>
        <taxon>Morganellaceae</taxon>
        <taxon>Photorhabdus</taxon>
    </lineage>
</organism>
<accession>Q7N8B1</accession>
<feature type="chain" id="PRO_0000410491" description="Photox toxin">
    <location>
        <begin position="1"/>
        <end position="408"/>
    </location>
</feature>
<feature type="domain" description="TR mART core" evidence="1">
    <location>
        <begin position="190"/>
        <end position="393"/>
    </location>
</feature>
<feature type="region of interest" description="Disordered" evidence="2">
    <location>
        <begin position="168"/>
        <end position="196"/>
    </location>
</feature>
<feature type="compositionally biased region" description="Pro residues" evidence="2">
    <location>
        <begin position="184"/>
        <end position="193"/>
    </location>
</feature>
<feature type="active site" evidence="1">
    <location>
        <position position="288"/>
    </location>
</feature>
<feature type="active site" evidence="1">
    <location>
        <position position="318"/>
    </location>
</feature>
<feature type="active site" evidence="1">
    <location>
        <position position="355"/>
    </location>
</feature>
<feature type="mutagenesis site" description="20000-fold reduction in mART activity. 4-fold decrease in NAD(+) affinity." evidence="3">
    <original>R</original>
    <variation>A</variation>
    <location>
        <position position="288"/>
    </location>
</feature>
<feature type="mutagenesis site" description="2000-fold reduction in mART activity. 5-fold decrease in NAD(+) affinity." evidence="3">
    <original>STS</original>
    <variation>ATA</variation>
    <location>
        <begin position="318"/>
        <end position="320"/>
    </location>
</feature>
<feature type="mutagenesis site" description="Total suppression of toxicity in yeast.">
    <original>EAE</original>
    <variation>AAA</variation>
    <location>
        <begin position="353"/>
        <end position="355"/>
    </location>
</feature>
<feature type="mutagenesis site" description="20% growth in yeast, 13000-fold reduction in mART activity. No change in NAD(+) affinity." evidence="3">
    <original>E</original>
    <variation>A</variation>
    <location>
        <position position="353"/>
    </location>
</feature>
<feature type="mutagenesis site" description="40% growth in yeast, 600-fold reduction in mART activity. 4-fold decrease in NAD(+) affinity." evidence="3">
    <original>E</original>
    <variation>A</variation>
    <location>
        <position position="355"/>
    </location>
</feature>
<name>PHXA_PHOLL</name>
<dbReference type="EC" id="2.4.2.31"/>
<dbReference type="EMBL" id="BX571861">
    <property type="protein sequence ID" value="CAE13117.1"/>
    <property type="molecule type" value="Genomic_DNA"/>
</dbReference>
<dbReference type="SMR" id="Q7N8B1"/>
<dbReference type="STRING" id="243265.plu0822"/>
<dbReference type="KEGG" id="plu:plu0822"/>
<dbReference type="HOGENOM" id="CLU_674135_0_0_6"/>
<dbReference type="Proteomes" id="UP000002514">
    <property type="component" value="Chromosome"/>
</dbReference>
<dbReference type="GO" id="GO:0005576">
    <property type="term" value="C:extracellular region"/>
    <property type="evidence" value="ECO:0007669"/>
    <property type="project" value="InterPro"/>
</dbReference>
<dbReference type="GO" id="GO:0106274">
    <property type="term" value="F:NAD+-protein-arginine ADP-ribosyltransferase activity"/>
    <property type="evidence" value="ECO:0007669"/>
    <property type="project" value="UniProtKB-EC"/>
</dbReference>
<dbReference type="GO" id="GO:0000166">
    <property type="term" value="F:nucleotide binding"/>
    <property type="evidence" value="ECO:0007669"/>
    <property type="project" value="UniProtKB-KW"/>
</dbReference>
<dbReference type="GO" id="GO:0016779">
    <property type="term" value="F:nucleotidyltransferase activity"/>
    <property type="evidence" value="ECO:0007669"/>
    <property type="project" value="UniProtKB-KW"/>
</dbReference>
<dbReference type="GO" id="GO:0090729">
    <property type="term" value="F:toxin activity"/>
    <property type="evidence" value="ECO:0007669"/>
    <property type="project" value="UniProtKB-KW"/>
</dbReference>
<dbReference type="CDD" id="cd21073">
    <property type="entry name" value="toxin_BteA-MLD_like"/>
    <property type="match status" value="1"/>
</dbReference>
<dbReference type="Gene3D" id="3.90.176.10">
    <property type="entry name" value="Toxin ADP-ribosyltransferase, Chain A, domain 1"/>
    <property type="match status" value="1"/>
</dbReference>
<dbReference type="InterPro" id="IPR003540">
    <property type="entry name" value="ADP-ribosyltransferase"/>
</dbReference>
<dbReference type="Pfam" id="PF03496">
    <property type="entry name" value="ADPrib_exo_Tox"/>
    <property type="match status" value="1"/>
</dbReference>
<dbReference type="SUPFAM" id="SSF56399">
    <property type="entry name" value="ADP-ribosylation"/>
    <property type="match status" value="1"/>
</dbReference>
<dbReference type="PROSITE" id="PS51996">
    <property type="entry name" value="TR_MART"/>
    <property type="match status" value="1"/>
</dbReference>
<comment type="function">
    <text evidence="3">Mono-ADP-ribosylates chicken skeletal alpha-actin and human non-skeletal beta- and gamma-actin. Mono-ADP-ribosylates 'Arg-177' of yeast actin, blocking its ability to polymerize. Does not possess NAD(+)-glycohydrolase activity, unlike most mART enzymes. Upon expression in S.cerevisiae almost completely inhibits growth.</text>
</comment>
<comment type="catalytic activity">
    <reaction>
        <text>L-arginyl-[protein] + NAD(+) = N(omega)-(ADP-D-ribosyl)-L-arginyl-[protein] + nicotinamide + H(+)</text>
        <dbReference type="Rhea" id="RHEA:19149"/>
        <dbReference type="Rhea" id="RHEA-COMP:10532"/>
        <dbReference type="Rhea" id="RHEA-COMP:15087"/>
        <dbReference type="ChEBI" id="CHEBI:15378"/>
        <dbReference type="ChEBI" id="CHEBI:17154"/>
        <dbReference type="ChEBI" id="CHEBI:29965"/>
        <dbReference type="ChEBI" id="CHEBI:57540"/>
        <dbReference type="ChEBI" id="CHEBI:142554"/>
        <dbReference type="EC" id="2.4.2.31"/>
    </reaction>
</comment>
<comment type="biophysicochemical properties">
    <kinetics>
        <KM evidence="3">27.4 uM for NAD(+)</KM>
        <KM evidence="3">0.6 uM for alpha-actin</KM>
        <text>Measured on chicken skeletal alpha-actin.</text>
    </kinetics>
</comment>
<comment type="similarity">
    <text evidence="4">In the C-terminal section; belongs to the SpvB family.</text>
</comment>
<keyword id="KW-0328">Glycosyltransferase</keyword>
<keyword id="KW-0520">NAD</keyword>
<keyword id="KW-0521">NADP</keyword>
<keyword id="KW-0547">Nucleotide-binding</keyword>
<keyword id="KW-0548">Nucleotidyltransferase</keyword>
<keyword id="KW-1185">Reference proteome</keyword>
<keyword id="KW-0800">Toxin</keyword>
<keyword id="KW-0808">Transferase</keyword>
<keyword id="KW-0843">Virulence</keyword>
<proteinExistence type="evidence at protein level"/>
<sequence>MEKIMPISPISGHMPLSQIQVPQHATTSPLLEQGNRLFEQSVRRGPLHFQSSSLKHLCAELRQLQNAPSSMQARRVQDAIQHWENHHPKEVMARSTRLAELKQALAEQGTVGRTLQSKVMATGPQVILKQPMPALPQSIAAQITKAQTGCTTTLVSSATAELIKHNQNNQQHIKDSDGRKPVNNMPPPPPPPMADKTQKVKKWVVNTDSKQLQALRYYSAQGYNLINTYLRGGEYVKHQAIETLLSRNYLHSNEPTPQEFDAGMRAYIQDVTEGLNELAITDHKKVYRGLKFDKSELKNLLDQYTTEGNIIAEKGFLSTSPDKAWVNDTILVINLESGHKGRILGDAAHFKGEAEMLFPPESKMLVEKVLNRDDKEFDSHFSNLRLTDDASADTTRIKRIINIKMLNE</sequence>
<evidence type="ECO:0000255" key="1">
    <source>
        <dbReference type="PROSITE-ProRule" id="PRU01340"/>
    </source>
</evidence>
<evidence type="ECO:0000256" key="2">
    <source>
        <dbReference type="SAM" id="MobiDB-lite"/>
    </source>
</evidence>
<evidence type="ECO:0000269" key="3">
    <source>
    </source>
</evidence>
<evidence type="ECO:0000305" key="4"/>